<evidence type="ECO:0000250" key="1">
    <source>
        <dbReference type="UniProtKB" id="Q86TU7"/>
    </source>
</evidence>
<evidence type="ECO:0000250" key="2">
    <source>
        <dbReference type="UniProtKB" id="Q91WC0"/>
    </source>
</evidence>
<evidence type="ECO:0000255" key="3">
    <source>
        <dbReference type="PROSITE-ProRule" id="PRU00190"/>
    </source>
</evidence>
<evidence type="ECO:0000255" key="4">
    <source>
        <dbReference type="PROSITE-ProRule" id="PRU00898"/>
    </source>
</evidence>
<evidence type="ECO:0000256" key="5">
    <source>
        <dbReference type="SAM" id="MobiDB-lite"/>
    </source>
</evidence>
<evidence type="ECO:0000269" key="6">
    <source>
    </source>
</evidence>
<evidence type="ECO:0000303" key="7">
    <source>
    </source>
</evidence>
<evidence type="ECO:0000305" key="8"/>
<evidence type="ECO:0000312" key="9">
    <source>
        <dbReference type="RGD" id="1309550"/>
    </source>
</evidence>
<sequence>MGKKSRVKTQKSGTGATATVSPKEILNLTSELLQKCSSPAPGPGKEWEEYTQIRALVEKIRKKQKGLSVTFDGKREDYFPDLMKWASENGASVEGFEMVNFKEEGFGLRATRDIKAEELFLWVPRKLLMTVESAKNSILGPLYSQDRILQAMGNIALAFHLLCERASPNSFWQPYIQTLPSEYDTPLYFEEEEVRCLQSTQAIHDVFSQYKNTARQYAYFYKVIQTHPHANKLPLKDSFTYEDYRWAVSSVMTRQNQIPTEDGSRVTLALIPLWDMCNHTNGLITTGYNLEDDRCECVALQDFQAGDQIYIFYGTRSNAEFVIHSGFFFDNNSHDRVKIKLGVSKSDRLYAMKAEVLARAGIPTSSVFALHFTEPPISAQLLAFLRVFCMTEEELKEHLLGDSAIDRIFTLGNSEFPVSWDNEVKLWTFLEDRASLLLKTYKTTIEEDKTVLKNPDLSVRATMAIKLRLGEKEILEKAVKSAAMNREYYRKHMEERAPLPRYEESDLGLLEGGVGDSRLPLVLRKLEEEAGVQESLSLTETVSKVKAAENGLVNGESLIPNGTRSENESLSPEESENTTGDTEESSGSMDAVKERL</sequence>
<accession>G3V6U9</accession>
<accession>Q5FWY6</accession>
<organism>
    <name type="scientific">Rattus norvegicus</name>
    <name type="common">Rat</name>
    <dbReference type="NCBI Taxonomy" id="10116"/>
    <lineage>
        <taxon>Eukaryota</taxon>
        <taxon>Metazoa</taxon>
        <taxon>Chordata</taxon>
        <taxon>Craniata</taxon>
        <taxon>Vertebrata</taxon>
        <taxon>Euteleostomi</taxon>
        <taxon>Mammalia</taxon>
        <taxon>Eutheria</taxon>
        <taxon>Euarchontoglires</taxon>
        <taxon>Glires</taxon>
        <taxon>Rodentia</taxon>
        <taxon>Myomorpha</taxon>
        <taxon>Muroidea</taxon>
        <taxon>Muridae</taxon>
        <taxon>Murinae</taxon>
        <taxon>Rattus</taxon>
    </lineage>
</organism>
<reference key="1">
    <citation type="journal article" date="2004" name="Nature">
        <title>Genome sequence of the Brown Norway rat yields insights into mammalian evolution.</title>
        <authorList>
            <person name="Gibbs R.A."/>
            <person name="Weinstock G.M."/>
            <person name="Metzker M.L."/>
            <person name="Muzny D.M."/>
            <person name="Sodergren E.J."/>
            <person name="Scherer S."/>
            <person name="Scott G."/>
            <person name="Steffen D."/>
            <person name="Worley K.C."/>
            <person name="Burch P.E."/>
            <person name="Okwuonu G."/>
            <person name="Hines S."/>
            <person name="Lewis L."/>
            <person name="Deramo C."/>
            <person name="Delgado O."/>
            <person name="Dugan-Rocha S."/>
            <person name="Miner G."/>
            <person name="Morgan M."/>
            <person name="Hawes A."/>
            <person name="Gill R."/>
            <person name="Holt R.A."/>
            <person name="Adams M.D."/>
            <person name="Amanatides P.G."/>
            <person name="Baden-Tillson H."/>
            <person name="Barnstead M."/>
            <person name="Chin S."/>
            <person name="Evans C.A."/>
            <person name="Ferriera S."/>
            <person name="Fosler C."/>
            <person name="Glodek A."/>
            <person name="Gu Z."/>
            <person name="Jennings D."/>
            <person name="Kraft C.L."/>
            <person name="Nguyen T."/>
            <person name="Pfannkoch C.M."/>
            <person name="Sitter C."/>
            <person name="Sutton G.G."/>
            <person name="Venter J.C."/>
            <person name="Woodage T."/>
            <person name="Smith D."/>
            <person name="Lee H.-M."/>
            <person name="Gustafson E."/>
            <person name="Cahill P."/>
            <person name="Kana A."/>
            <person name="Doucette-Stamm L."/>
            <person name="Weinstock K."/>
            <person name="Fechtel K."/>
            <person name="Weiss R.B."/>
            <person name="Dunn D.M."/>
            <person name="Green E.D."/>
            <person name="Blakesley R.W."/>
            <person name="Bouffard G.G."/>
            <person name="De Jong P.J."/>
            <person name="Osoegawa K."/>
            <person name="Zhu B."/>
            <person name="Marra M."/>
            <person name="Schein J."/>
            <person name="Bosdet I."/>
            <person name="Fjell C."/>
            <person name="Jones S."/>
            <person name="Krzywinski M."/>
            <person name="Mathewson C."/>
            <person name="Siddiqui A."/>
            <person name="Wye N."/>
            <person name="McPherson J."/>
            <person name="Zhao S."/>
            <person name="Fraser C.M."/>
            <person name="Shetty J."/>
            <person name="Shatsman S."/>
            <person name="Geer K."/>
            <person name="Chen Y."/>
            <person name="Abramzon S."/>
            <person name="Nierman W.C."/>
            <person name="Havlak P.H."/>
            <person name="Chen R."/>
            <person name="Durbin K.J."/>
            <person name="Egan A."/>
            <person name="Ren Y."/>
            <person name="Song X.-Z."/>
            <person name="Li B."/>
            <person name="Liu Y."/>
            <person name="Qin X."/>
            <person name="Cawley S."/>
            <person name="Cooney A.J."/>
            <person name="D'Souza L.M."/>
            <person name="Martin K."/>
            <person name="Wu J.Q."/>
            <person name="Gonzalez-Garay M.L."/>
            <person name="Jackson A.R."/>
            <person name="Kalafus K.J."/>
            <person name="McLeod M.P."/>
            <person name="Milosavljevic A."/>
            <person name="Virk D."/>
            <person name="Volkov A."/>
            <person name="Wheeler D.A."/>
            <person name="Zhang Z."/>
            <person name="Bailey J.A."/>
            <person name="Eichler E.E."/>
            <person name="Tuzun E."/>
            <person name="Birney E."/>
            <person name="Mongin E."/>
            <person name="Ureta-Vidal A."/>
            <person name="Woodwark C."/>
            <person name="Zdobnov E."/>
            <person name="Bork P."/>
            <person name="Suyama M."/>
            <person name="Torrents D."/>
            <person name="Alexandersson M."/>
            <person name="Trask B.J."/>
            <person name="Young J.M."/>
            <person name="Huang H."/>
            <person name="Wang H."/>
            <person name="Xing H."/>
            <person name="Daniels S."/>
            <person name="Gietzen D."/>
            <person name="Schmidt J."/>
            <person name="Stevens K."/>
            <person name="Vitt U."/>
            <person name="Wingrove J."/>
            <person name="Camara F."/>
            <person name="Mar Alba M."/>
            <person name="Abril J.F."/>
            <person name="Guigo R."/>
            <person name="Smit A."/>
            <person name="Dubchak I."/>
            <person name="Rubin E.M."/>
            <person name="Couronne O."/>
            <person name="Poliakov A."/>
            <person name="Huebner N."/>
            <person name="Ganten D."/>
            <person name="Goesele C."/>
            <person name="Hummel O."/>
            <person name="Kreitler T."/>
            <person name="Lee Y.-A."/>
            <person name="Monti J."/>
            <person name="Schulz H."/>
            <person name="Zimdahl H."/>
            <person name="Himmelbauer H."/>
            <person name="Lehrach H."/>
            <person name="Jacob H.J."/>
            <person name="Bromberg S."/>
            <person name="Gullings-Handley J."/>
            <person name="Jensen-Seaman M.I."/>
            <person name="Kwitek A.E."/>
            <person name="Lazar J."/>
            <person name="Pasko D."/>
            <person name="Tonellato P.J."/>
            <person name="Twigger S."/>
            <person name="Ponting C.P."/>
            <person name="Duarte J.M."/>
            <person name="Rice S."/>
            <person name="Goodstadt L."/>
            <person name="Beatson S.A."/>
            <person name="Emes R.D."/>
            <person name="Winter E.E."/>
            <person name="Webber C."/>
            <person name="Brandt P."/>
            <person name="Nyakatura G."/>
            <person name="Adetobi M."/>
            <person name="Chiaromonte F."/>
            <person name="Elnitski L."/>
            <person name="Eswara P."/>
            <person name="Hardison R.C."/>
            <person name="Hou M."/>
            <person name="Kolbe D."/>
            <person name="Makova K."/>
            <person name="Miller W."/>
            <person name="Nekrutenko A."/>
            <person name="Riemer C."/>
            <person name="Schwartz S."/>
            <person name="Taylor J."/>
            <person name="Yang S."/>
            <person name="Zhang Y."/>
            <person name="Lindpaintner K."/>
            <person name="Andrews T.D."/>
            <person name="Caccamo M."/>
            <person name="Clamp M."/>
            <person name="Clarke L."/>
            <person name="Curwen V."/>
            <person name="Durbin R.M."/>
            <person name="Eyras E."/>
            <person name="Searle S.M."/>
            <person name="Cooper G.M."/>
            <person name="Batzoglou S."/>
            <person name="Brudno M."/>
            <person name="Sidow A."/>
            <person name="Stone E.A."/>
            <person name="Payseur B.A."/>
            <person name="Bourque G."/>
            <person name="Lopez-Otin C."/>
            <person name="Puente X.S."/>
            <person name="Chakrabarti K."/>
            <person name="Chatterji S."/>
            <person name="Dewey C."/>
            <person name="Pachter L."/>
            <person name="Bray N."/>
            <person name="Yap V.B."/>
            <person name="Caspi A."/>
            <person name="Tesler G."/>
            <person name="Pevzner P.A."/>
            <person name="Haussler D."/>
            <person name="Roskin K.M."/>
            <person name="Baertsch R."/>
            <person name="Clawson H."/>
            <person name="Furey T.S."/>
            <person name="Hinrichs A.S."/>
            <person name="Karolchik D."/>
            <person name="Kent W.J."/>
            <person name="Rosenbloom K.R."/>
            <person name="Trumbower H."/>
            <person name="Weirauch M."/>
            <person name="Cooper D.N."/>
            <person name="Stenson P.D."/>
            <person name="Ma B."/>
            <person name="Brent M."/>
            <person name="Arumugam M."/>
            <person name="Shteynberg D."/>
            <person name="Copley R.R."/>
            <person name="Taylor M.S."/>
            <person name="Riethman H."/>
            <person name="Mudunuri U."/>
            <person name="Peterson J."/>
            <person name="Guyer M."/>
            <person name="Felsenfeld A."/>
            <person name="Old S."/>
            <person name="Mockrin S."/>
            <person name="Collins F.S."/>
        </authorList>
    </citation>
    <scope>NUCLEOTIDE SEQUENCE [LARGE SCALE GENOMIC DNA]</scope>
    <source>
        <strain>Brown Norway</strain>
    </source>
</reference>
<reference key="2">
    <citation type="submission" date="2005-09" db="EMBL/GenBank/DDBJ databases">
        <authorList>
            <person name="Mural R.J."/>
            <person name="Adams M.D."/>
            <person name="Myers E.W."/>
            <person name="Smith H.O."/>
            <person name="Venter J.C."/>
        </authorList>
    </citation>
    <scope>NUCLEOTIDE SEQUENCE [LARGE SCALE GENOMIC DNA]</scope>
</reference>
<reference key="3">
    <citation type="journal article" date="2004" name="Genome Res.">
        <title>The status, quality, and expansion of the NIH full-length cDNA project: the Mammalian Gene Collection (MGC).</title>
        <authorList>
            <consortium name="The MGC Project Team"/>
        </authorList>
    </citation>
    <scope>NUCLEOTIDE SEQUENCE [LARGE SCALE MRNA] OF 147-596</scope>
    <source>
        <tissue>Brain</tissue>
    </source>
</reference>
<reference key="4">
    <citation type="journal article" date="2018" name="Elife">
        <title>SETD3 protein is the actin-specific histidine N-methyltransferase.</title>
        <authorList>
            <person name="Kwiatkowski S."/>
            <person name="Seliga A.K."/>
            <person name="Vertommen D."/>
            <person name="Terreri M."/>
            <person name="Ishikawa T."/>
            <person name="Grabowska I."/>
            <person name="Tiebe M."/>
            <person name="Teleman A.A."/>
            <person name="Jagielski A.K."/>
            <person name="Veiga-da-Cunha M."/>
            <person name="Drozak J."/>
        </authorList>
    </citation>
    <scope>FUNCTION</scope>
    <scope>CATALYTIC ACTIVITY</scope>
    <scope>BIOPHYSICOCHEMICAL PROPERTIES</scope>
</reference>
<name>SETD3_RAT</name>
<feature type="chain" id="PRO_0000446383" description="Actin-histidine N-methyltransferase">
    <location>
        <begin position="1"/>
        <end position="596"/>
    </location>
</feature>
<feature type="domain" description="SET" evidence="3">
    <location>
        <begin position="94"/>
        <end position="314"/>
    </location>
</feature>
<feature type="region of interest" description="Disordered" evidence="5">
    <location>
        <begin position="1"/>
        <end position="22"/>
    </location>
</feature>
<feature type="region of interest" description="Disordered" evidence="5">
    <location>
        <begin position="551"/>
        <end position="596"/>
    </location>
</feature>
<feature type="compositionally biased region" description="Polar residues" evidence="5">
    <location>
        <begin position="10"/>
        <end position="20"/>
    </location>
</feature>
<feature type="compositionally biased region" description="Acidic residues" evidence="5">
    <location>
        <begin position="571"/>
        <end position="584"/>
    </location>
</feature>
<feature type="binding site" evidence="1">
    <location>
        <position position="75"/>
    </location>
    <ligand>
        <name>S-adenosyl-L-methionine</name>
        <dbReference type="ChEBI" id="CHEBI:59789"/>
    </ligand>
</feature>
<feature type="binding site" evidence="1">
    <location>
        <begin position="104"/>
        <end position="106"/>
    </location>
    <ligand>
        <name>S-adenosyl-L-methionine</name>
        <dbReference type="ChEBI" id="CHEBI:59789"/>
    </ligand>
</feature>
<feature type="binding site" evidence="1">
    <location>
        <position position="254"/>
    </location>
    <ligand>
        <name>S-adenosyl-L-methionine</name>
        <dbReference type="ChEBI" id="CHEBI:59789"/>
    </ligand>
</feature>
<feature type="binding site" evidence="1">
    <location>
        <begin position="275"/>
        <end position="279"/>
    </location>
    <ligand>
        <name>S-adenosyl-L-methionine</name>
        <dbReference type="ChEBI" id="CHEBI:59789"/>
    </ligand>
</feature>
<feature type="binding site" evidence="1">
    <location>
        <begin position="325"/>
        <end position="327"/>
    </location>
    <ligand>
        <name>S-adenosyl-L-methionine</name>
        <dbReference type="ChEBI" id="CHEBI:59789"/>
    </ligand>
</feature>
<proteinExistence type="evidence at protein level"/>
<comment type="function">
    <text evidence="1 6">Protein-histidine N-methyltransferase that specifically mediates 3-methylhistidine (tele-methylhistidine) methylation of actin at 'His-73' (PubMed:30526847). Histidine methylation of actin is required for smooth muscle contraction of the laboring uterus during delivery (By similarity). Does not have protein-lysine N-methyltransferase activity and probably only catalyzes histidine methylation of actin (By similarity).</text>
</comment>
<comment type="catalytic activity">
    <reaction evidence="6">
        <text>L-histidyl-[protein] + S-adenosyl-L-methionine = N(tele)-methyl-L-histidyl-[protein] + S-adenosyl-L-homocysteine + H(+)</text>
        <dbReference type="Rhea" id="RHEA:19369"/>
        <dbReference type="Rhea" id="RHEA-COMP:9745"/>
        <dbReference type="Rhea" id="RHEA-COMP:11600"/>
        <dbReference type="ChEBI" id="CHEBI:15378"/>
        <dbReference type="ChEBI" id="CHEBI:16367"/>
        <dbReference type="ChEBI" id="CHEBI:29979"/>
        <dbReference type="ChEBI" id="CHEBI:57856"/>
        <dbReference type="ChEBI" id="CHEBI:59789"/>
        <dbReference type="EC" id="2.1.1.85"/>
    </reaction>
    <physiologicalReaction direction="left-to-right" evidence="6">
        <dbReference type="Rhea" id="RHEA:19370"/>
    </physiologicalReaction>
</comment>
<comment type="biophysicochemical properties">
    <kinetics>
        <KM evidence="6">2.996 uM for beta-actin</KM>
        <KM evidence="6">0.109 uM for S-adenosyl-L-methionine</KM>
        <Vmax evidence="6">11.28 nmol/min/mg enzyme with beta-actin as substrate</Vmax>
        <Vmax evidence="6">8.053 nmol/min/mg enzyme with S-adenosyl-L-methionine as substrate</Vmax>
        <text evidence="6">kcat is 0.8 min(-1) with beta-actin as substrate (PubMed:30526847). kcat is 0.57 min(-1) with S-adenosyl-L-methionine as substrate (PubMed:30526847).</text>
    </kinetics>
</comment>
<comment type="subunit">
    <text evidence="2">Interacts with MYOD1.</text>
</comment>
<comment type="subcellular location">
    <subcellularLocation>
        <location evidence="1">Cytoplasm</location>
    </subcellularLocation>
    <subcellularLocation>
        <location evidence="2">Nucleus</location>
    </subcellularLocation>
    <text evidence="1">Localizes mainly in the cytoplasm.</text>
</comment>
<comment type="domain">
    <text evidence="1">The SET domain specifically recognizes and binds actin, suggesting that it does not accommodate substrates diverging from actin.</text>
</comment>
<comment type="PTM">
    <text evidence="1">Phosphorylated by GSK3B, which is required for recognition by the SCF(FBXW7) complex and subsequent degradation.</text>
</comment>
<comment type="PTM">
    <text evidence="1">Ubiquitinated by the SCF(FBXW7) complex following phosphorylation by GSK3B, leading to its degradation by the proteasome.</text>
</comment>
<comment type="similarity">
    <text evidence="4">Belongs to the class V-like SAM-binding methyltransferase superfamily. SETD3 actin-histidine methyltransferase family.</text>
</comment>
<gene>
    <name evidence="7 9" type="primary">Setd3</name>
</gene>
<keyword id="KW-0009">Actin-binding</keyword>
<keyword id="KW-0963">Cytoplasm</keyword>
<keyword id="KW-0455">Luminescence</keyword>
<keyword id="KW-0489">Methyltransferase</keyword>
<keyword id="KW-0539">Nucleus</keyword>
<keyword id="KW-0597">Phosphoprotein</keyword>
<keyword id="KW-0599">Photoprotein</keyword>
<keyword id="KW-1185">Reference proteome</keyword>
<keyword id="KW-0949">S-adenosyl-L-methionine</keyword>
<keyword id="KW-0808">Transferase</keyword>
<keyword id="KW-0832">Ubl conjugation</keyword>
<protein>
    <recommendedName>
        <fullName evidence="8">Actin-histidine N-methyltransferase</fullName>
        <ecNumber evidence="6">2.1.1.85</ecNumber>
    </recommendedName>
    <alternativeName>
        <fullName evidence="8">Protein-L-histidine N-tele-methyltransferase</fullName>
    </alternativeName>
    <alternativeName>
        <fullName evidence="8">SET domain-containing protein 3</fullName>
    </alternativeName>
</protein>
<dbReference type="EC" id="2.1.1.85" evidence="6"/>
<dbReference type="EMBL" id="AABR07065498">
    <property type="status" value="NOT_ANNOTATED_CDS"/>
    <property type="molecule type" value="Genomic_DNA"/>
</dbReference>
<dbReference type="EMBL" id="CH474034">
    <property type="protein sequence ID" value="EDL97577.1"/>
    <property type="molecule type" value="Genomic_DNA"/>
</dbReference>
<dbReference type="EMBL" id="BC089108">
    <property type="protein sequence ID" value="AAH89108.1"/>
    <property type="molecule type" value="mRNA"/>
</dbReference>
<dbReference type="RefSeq" id="NP_001333399.1">
    <property type="nucleotide sequence ID" value="NM_001346470.1"/>
</dbReference>
<dbReference type="RefSeq" id="XP_002726820.2">
    <property type="nucleotide sequence ID" value="XM_002726774.2"/>
</dbReference>
<dbReference type="SMR" id="G3V6U9"/>
<dbReference type="FunCoup" id="G3V6U9">
    <property type="interactions" value="2520"/>
</dbReference>
<dbReference type="STRING" id="10116.ENSRNOP00000009121"/>
<dbReference type="PhosphoSitePlus" id="G3V6U9"/>
<dbReference type="jPOST" id="G3V6U9"/>
<dbReference type="PaxDb" id="10116-ENSRNOP00000009121"/>
<dbReference type="Ensembl" id="ENSRNOT00000009120.9">
    <property type="protein sequence ID" value="ENSRNOP00000009121.4"/>
    <property type="gene ID" value="ENSRNOG00000006587.9"/>
</dbReference>
<dbReference type="GeneID" id="299295"/>
<dbReference type="KEGG" id="rno:299295"/>
<dbReference type="AGR" id="RGD:1309550"/>
<dbReference type="CTD" id="84193"/>
<dbReference type="RGD" id="1309550">
    <property type="gene designation" value="Setd3"/>
</dbReference>
<dbReference type="eggNOG" id="KOG1337">
    <property type="taxonomic scope" value="Eukaryota"/>
</dbReference>
<dbReference type="GeneTree" id="ENSGT00940000153577"/>
<dbReference type="HOGENOM" id="CLU_028272_0_0_1"/>
<dbReference type="InParanoid" id="G3V6U9"/>
<dbReference type="OMA" id="QHIDGIF"/>
<dbReference type="OrthoDB" id="441812at2759"/>
<dbReference type="TreeFam" id="TF354226"/>
<dbReference type="Reactome" id="R-RNO-3214841">
    <property type="pathway name" value="PKMTs methylate histone lysines"/>
</dbReference>
<dbReference type="PRO" id="PR:G3V6U9"/>
<dbReference type="Proteomes" id="UP000002494">
    <property type="component" value="Chromosome 6"/>
</dbReference>
<dbReference type="Proteomes" id="UP000234681">
    <property type="component" value="Chromosome 6"/>
</dbReference>
<dbReference type="Bgee" id="ENSRNOG00000006587">
    <property type="expression patterns" value="Expressed in skeletal muscle tissue and 19 other cell types or tissues"/>
</dbReference>
<dbReference type="GO" id="GO:0000785">
    <property type="term" value="C:chromatin"/>
    <property type="evidence" value="ECO:0000266"/>
    <property type="project" value="RGD"/>
</dbReference>
<dbReference type="GO" id="GO:0005737">
    <property type="term" value="C:cytoplasm"/>
    <property type="evidence" value="ECO:0000250"/>
    <property type="project" value="UniProtKB"/>
</dbReference>
<dbReference type="GO" id="GO:0005634">
    <property type="term" value="C:nucleus"/>
    <property type="evidence" value="ECO:0007669"/>
    <property type="project" value="UniProtKB-SubCell"/>
</dbReference>
<dbReference type="GO" id="GO:0003779">
    <property type="term" value="F:actin binding"/>
    <property type="evidence" value="ECO:0007669"/>
    <property type="project" value="UniProtKB-KW"/>
</dbReference>
<dbReference type="GO" id="GO:0046975">
    <property type="term" value="F:histone H3K36 methyltransferase activity"/>
    <property type="evidence" value="ECO:0000266"/>
    <property type="project" value="RGD"/>
</dbReference>
<dbReference type="GO" id="GO:0042800">
    <property type="term" value="F:histone H3K4 methyltransferase activity"/>
    <property type="evidence" value="ECO:0000266"/>
    <property type="project" value="RGD"/>
</dbReference>
<dbReference type="GO" id="GO:0018064">
    <property type="term" value="F:protein-L-histidine N-tele-methyltransferase activity"/>
    <property type="evidence" value="ECO:0000314"/>
    <property type="project" value="UniProtKB"/>
</dbReference>
<dbReference type="GO" id="GO:0061629">
    <property type="term" value="F:RNA polymerase II-specific DNA-binding transcription factor binding"/>
    <property type="evidence" value="ECO:0000266"/>
    <property type="project" value="RGD"/>
</dbReference>
<dbReference type="GO" id="GO:0003713">
    <property type="term" value="F:transcription coactivator activity"/>
    <property type="evidence" value="ECO:0000318"/>
    <property type="project" value="GO_Central"/>
</dbReference>
<dbReference type="GO" id="GO:0030047">
    <property type="term" value="P:actin modification"/>
    <property type="evidence" value="ECO:0000314"/>
    <property type="project" value="UniProtKB"/>
</dbReference>
<dbReference type="GO" id="GO:0008218">
    <property type="term" value="P:bioluminescence"/>
    <property type="evidence" value="ECO:0007669"/>
    <property type="project" value="UniProtKB-KW"/>
</dbReference>
<dbReference type="GO" id="GO:0018021">
    <property type="term" value="P:peptidyl-histidine methylation"/>
    <property type="evidence" value="ECO:0000314"/>
    <property type="project" value="UniProtKB"/>
</dbReference>
<dbReference type="GO" id="GO:0051149">
    <property type="term" value="P:positive regulation of muscle cell differentiation"/>
    <property type="evidence" value="ECO:0000266"/>
    <property type="project" value="RGD"/>
</dbReference>
<dbReference type="GO" id="GO:0045944">
    <property type="term" value="P:positive regulation of transcription by RNA polymerase II"/>
    <property type="evidence" value="ECO:0000266"/>
    <property type="project" value="RGD"/>
</dbReference>
<dbReference type="GO" id="GO:0070472">
    <property type="term" value="P:regulation of uterine smooth muscle contraction"/>
    <property type="evidence" value="ECO:0000250"/>
    <property type="project" value="UniProtKB"/>
</dbReference>
<dbReference type="CDD" id="cd19176">
    <property type="entry name" value="SET_SETD3"/>
    <property type="match status" value="1"/>
</dbReference>
<dbReference type="FunFam" id="3.90.1410.10:FF:000001">
    <property type="entry name" value="histone-lysine N-methyltransferase setd3 isoform X1"/>
    <property type="match status" value="1"/>
</dbReference>
<dbReference type="FunFam" id="3.90.1420.10:FF:000001">
    <property type="entry name" value="histone-lysine N-methyltransferase setd3 isoform X1"/>
    <property type="match status" value="1"/>
</dbReference>
<dbReference type="Gene3D" id="3.90.1420.10">
    <property type="entry name" value="Rubisco LSMT, substrate-binding domain"/>
    <property type="match status" value="1"/>
</dbReference>
<dbReference type="Gene3D" id="3.90.1410.10">
    <property type="entry name" value="set domain protein methyltransferase, domain 1"/>
    <property type="match status" value="1"/>
</dbReference>
<dbReference type="InterPro" id="IPR015353">
    <property type="entry name" value="Rubisco_LSMT_subst-bd"/>
</dbReference>
<dbReference type="InterPro" id="IPR036464">
    <property type="entry name" value="Rubisco_LSMT_subst-bd_sf"/>
</dbReference>
<dbReference type="InterPro" id="IPR001214">
    <property type="entry name" value="SET_dom"/>
</dbReference>
<dbReference type="InterPro" id="IPR046341">
    <property type="entry name" value="SET_dom_sf"/>
</dbReference>
<dbReference type="InterPro" id="IPR025785">
    <property type="entry name" value="SETD3"/>
</dbReference>
<dbReference type="InterPro" id="IPR044428">
    <property type="entry name" value="SETD3_SET"/>
</dbReference>
<dbReference type="InterPro" id="IPR050600">
    <property type="entry name" value="SETD3_SETD6_MTase"/>
</dbReference>
<dbReference type="PANTHER" id="PTHR13271:SF47">
    <property type="entry name" value="ACTIN-HISTIDINE N-METHYLTRANSFERASE"/>
    <property type="match status" value="1"/>
</dbReference>
<dbReference type="PANTHER" id="PTHR13271">
    <property type="entry name" value="UNCHARACTERIZED PUTATIVE METHYLTRANSFERASE"/>
    <property type="match status" value="1"/>
</dbReference>
<dbReference type="Pfam" id="PF09273">
    <property type="entry name" value="Rubis-subs-bind"/>
    <property type="match status" value="1"/>
</dbReference>
<dbReference type="Pfam" id="PF00856">
    <property type="entry name" value="SET"/>
    <property type="match status" value="1"/>
</dbReference>
<dbReference type="SUPFAM" id="SSF81822">
    <property type="entry name" value="RuBisCo LSMT C-terminal, substrate-binding domain"/>
    <property type="match status" value="1"/>
</dbReference>
<dbReference type="SUPFAM" id="SSF82199">
    <property type="entry name" value="SET domain"/>
    <property type="match status" value="1"/>
</dbReference>
<dbReference type="PROSITE" id="PS51565">
    <property type="entry name" value="SAM_MT85_SETD3"/>
    <property type="match status" value="1"/>
</dbReference>
<dbReference type="PROSITE" id="PS50280">
    <property type="entry name" value="SET"/>
    <property type="match status" value="1"/>
</dbReference>